<protein>
    <recommendedName>
        <fullName evidence="1">Aspartate--tRNA(Asp/Asn) ligase</fullName>
        <ecNumber evidence="1">6.1.1.23</ecNumber>
    </recommendedName>
    <alternativeName>
        <fullName evidence="1">Aspartyl-tRNA synthetase</fullName>
        <shortName evidence="1">AspRS</shortName>
    </alternativeName>
    <alternativeName>
        <fullName evidence="1">Non-discriminating aspartyl-tRNA synthetase</fullName>
        <shortName evidence="1">ND-AspRS</shortName>
    </alternativeName>
</protein>
<accession>Q6G330</accession>
<reference key="1">
    <citation type="journal article" date="2004" name="Proc. Natl. Acad. Sci. U.S.A.">
        <title>The louse-borne human pathogen Bartonella quintana is a genomic derivative of the zoonotic agent Bartonella henselae.</title>
        <authorList>
            <person name="Alsmark U.C.M."/>
            <person name="Frank A.C."/>
            <person name="Karlberg E.O."/>
            <person name="Legault B.-A."/>
            <person name="Ardell D.H."/>
            <person name="Canbaeck B."/>
            <person name="Eriksson A.-S."/>
            <person name="Naeslund A.K."/>
            <person name="Handley S.A."/>
            <person name="Huvet M."/>
            <person name="La Scola B."/>
            <person name="Holmberg M."/>
            <person name="Andersson S.G.E."/>
        </authorList>
    </citation>
    <scope>NUCLEOTIDE SEQUENCE [LARGE SCALE GENOMIC DNA]</scope>
    <source>
        <strain>ATCC 49882 / DSM 28221 / CCUG 30454 / Houston 1</strain>
    </source>
</reference>
<feature type="chain" id="PRO_0000110831" description="Aspartate--tRNA(Asp/Asn) ligase">
    <location>
        <begin position="1"/>
        <end position="596"/>
    </location>
</feature>
<feature type="region of interest" description="Aspartate" evidence="1">
    <location>
        <begin position="199"/>
        <end position="202"/>
    </location>
</feature>
<feature type="binding site" evidence="1">
    <location>
        <position position="175"/>
    </location>
    <ligand>
        <name>L-aspartate</name>
        <dbReference type="ChEBI" id="CHEBI:29991"/>
    </ligand>
</feature>
<feature type="binding site" evidence="1">
    <location>
        <begin position="221"/>
        <end position="223"/>
    </location>
    <ligand>
        <name>ATP</name>
        <dbReference type="ChEBI" id="CHEBI:30616"/>
    </ligand>
</feature>
<feature type="binding site" evidence="1">
    <location>
        <position position="221"/>
    </location>
    <ligand>
        <name>L-aspartate</name>
        <dbReference type="ChEBI" id="CHEBI:29991"/>
    </ligand>
</feature>
<feature type="binding site" evidence="1">
    <location>
        <position position="454"/>
    </location>
    <ligand>
        <name>L-aspartate</name>
        <dbReference type="ChEBI" id="CHEBI:29991"/>
    </ligand>
</feature>
<feature type="binding site" evidence="1">
    <location>
        <position position="488"/>
    </location>
    <ligand>
        <name>ATP</name>
        <dbReference type="ChEBI" id="CHEBI:30616"/>
    </ligand>
</feature>
<feature type="binding site" evidence="1">
    <location>
        <position position="495"/>
    </location>
    <ligand>
        <name>L-aspartate</name>
        <dbReference type="ChEBI" id="CHEBI:29991"/>
    </ligand>
</feature>
<feature type="binding site" evidence="1">
    <location>
        <begin position="540"/>
        <end position="543"/>
    </location>
    <ligand>
        <name>ATP</name>
        <dbReference type="ChEBI" id="CHEBI:30616"/>
    </ligand>
</feature>
<feature type="site" description="Important for tRNA non-discrimination" evidence="1">
    <location>
        <position position="33"/>
    </location>
</feature>
<proteinExistence type="inferred from homology"/>
<comment type="function">
    <text evidence="1">Aspartyl-tRNA synthetase with relaxed tRNA specificity since it is able to aspartylate not only its cognate tRNA(Asp) but also tRNA(Asn). Reaction proceeds in two steps: L-aspartate is first activated by ATP to form Asp-AMP and then transferred to the acceptor end of tRNA(Asp/Asn).</text>
</comment>
<comment type="catalytic activity">
    <reaction evidence="1">
        <text>tRNA(Asx) + L-aspartate + ATP = L-aspartyl-tRNA(Asx) + AMP + diphosphate</text>
        <dbReference type="Rhea" id="RHEA:18349"/>
        <dbReference type="Rhea" id="RHEA-COMP:9710"/>
        <dbReference type="Rhea" id="RHEA-COMP:9711"/>
        <dbReference type="ChEBI" id="CHEBI:29991"/>
        <dbReference type="ChEBI" id="CHEBI:30616"/>
        <dbReference type="ChEBI" id="CHEBI:33019"/>
        <dbReference type="ChEBI" id="CHEBI:78442"/>
        <dbReference type="ChEBI" id="CHEBI:78516"/>
        <dbReference type="ChEBI" id="CHEBI:456215"/>
        <dbReference type="EC" id="6.1.1.23"/>
    </reaction>
</comment>
<comment type="subunit">
    <text evidence="1">Homodimer.</text>
</comment>
<comment type="subcellular location">
    <subcellularLocation>
        <location evidence="1">Cytoplasm</location>
    </subcellularLocation>
</comment>
<comment type="similarity">
    <text evidence="1">Belongs to the class-II aminoacyl-tRNA synthetase family. Type 1 subfamily.</text>
</comment>
<name>SYDND_BARHE</name>
<dbReference type="EC" id="6.1.1.23" evidence="1"/>
<dbReference type="EMBL" id="BX897699">
    <property type="protein sequence ID" value="CAF27772.1"/>
    <property type="molecule type" value="Genomic_DNA"/>
</dbReference>
<dbReference type="RefSeq" id="WP_011180850.1">
    <property type="nucleotide sequence ID" value="NC_005956.1"/>
</dbReference>
<dbReference type="SMR" id="Q6G330"/>
<dbReference type="PaxDb" id="283166-BH09790"/>
<dbReference type="EnsemblBacteria" id="CAF27772">
    <property type="protein sequence ID" value="CAF27772"/>
    <property type="gene ID" value="BH09790"/>
</dbReference>
<dbReference type="GeneID" id="92985330"/>
<dbReference type="KEGG" id="bhe:BH09790"/>
<dbReference type="eggNOG" id="COG0173">
    <property type="taxonomic scope" value="Bacteria"/>
</dbReference>
<dbReference type="OrthoDB" id="9802326at2"/>
<dbReference type="Proteomes" id="UP000000421">
    <property type="component" value="Chromosome"/>
</dbReference>
<dbReference type="GO" id="GO:0005737">
    <property type="term" value="C:cytoplasm"/>
    <property type="evidence" value="ECO:0007669"/>
    <property type="project" value="UniProtKB-SubCell"/>
</dbReference>
<dbReference type="GO" id="GO:0004815">
    <property type="term" value="F:aspartate-tRNA ligase activity"/>
    <property type="evidence" value="ECO:0007669"/>
    <property type="project" value="UniProtKB-UniRule"/>
</dbReference>
<dbReference type="GO" id="GO:0050560">
    <property type="term" value="F:aspartate-tRNA(Asn) ligase activity"/>
    <property type="evidence" value="ECO:0007669"/>
    <property type="project" value="UniProtKB-EC"/>
</dbReference>
<dbReference type="GO" id="GO:0005524">
    <property type="term" value="F:ATP binding"/>
    <property type="evidence" value="ECO:0007669"/>
    <property type="project" value="UniProtKB-UniRule"/>
</dbReference>
<dbReference type="GO" id="GO:0003676">
    <property type="term" value="F:nucleic acid binding"/>
    <property type="evidence" value="ECO:0007669"/>
    <property type="project" value="InterPro"/>
</dbReference>
<dbReference type="GO" id="GO:0006422">
    <property type="term" value="P:aspartyl-tRNA aminoacylation"/>
    <property type="evidence" value="ECO:0007669"/>
    <property type="project" value="UniProtKB-UniRule"/>
</dbReference>
<dbReference type="CDD" id="cd00777">
    <property type="entry name" value="AspRS_core"/>
    <property type="match status" value="1"/>
</dbReference>
<dbReference type="CDD" id="cd04317">
    <property type="entry name" value="EcAspRS_like_N"/>
    <property type="match status" value="1"/>
</dbReference>
<dbReference type="Gene3D" id="3.30.930.10">
    <property type="entry name" value="Bira Bifunctional Protein, Domain 2"/>
    <property type="match status" value="1"/>
</dbReference>
<dbReference type="Gene3D" id="3.30.1360.30">
    <property type="entry name" value="GAD-like domain"/>
    <property type="match status" value="1"/>
</dbReference>
<dbReference type="Gene3D" id="2.40.50.140">
    <property type="entry name" value="Nucleic acid-binding proteins"/>
    <property type="match status" value="1"/>
</dbReference>
<dbReference type="HAMAP" id="MF_00044">
    <property type="entry name" value="Asp_tRNA_synth_type1"/>
    <property type="match status" value="1"/>
</dbReference>
<dbReference type="InterPro" id="IPR004364">
    <property type="entry name" value="Aa-tRNA-synt_II"/>
</dbReference>
<dbReference type="InterPro" id="IPR006195">
    <property type="entry name" value="aa-tRNA-synth_II"/>
</dbReference>
<dbReference type="InterPro" id="IPR045864">
    <property type="entry name" value="aa-tRNA-synth_II/BPL/LPL"/>
</dbReference>
<dbReference type="InterPro" id="IPR004524">
    <property type="entry name" value="Asp-tRNA-ligase_1"/>
</dbReference>
<dbReference type="InterPro" id="IPR047089">
    <property type="entry name" value="Asp-tRNA-ligase_1_N"/>
</dbReference>
<dbReference type="InterPro" id="IPR002312">
    <property type="entry name" value="Asp/Asn-tRNA-synth_IIb"/>
</dbReference>
<dbReference type="InterPro" id="IPR047090">
    <property type="entry name" value="AspRS_core"/>
</dbReference>
<dbReference type="InterPro" id="IPR004115">
    <property type="entry name" value="GAD-like_sf"/>
</dbReference>
<dbReference type="InterPro" id="IPR029351">
    <property type="entry name" value="GAD_dom"/>
</dbReference>
<dbReference type="InterPro" id="IPR012340">
    <property type="entry name" value="NA-bd_OB-fold"/>
</dbReference>
<dbReference type="InterPro" id="IPR004365">
    <property type="entry name" value="NA-bd_OB_tRNA"/>
</dbReference>
<dbReference type="NCBIfam" id="TIGR00459">
    <property type="entry name" value="aspS_bact"/>
    <property type="match status" value="1"/>
</dbReference>
<dbReference type="NCBIfam" id="NF001750">
    <property type="entry name" value="PRK00476.1"/>
    <property type="match status" value="1"/>
</dbReference>
<dbReference type="PANTHER" id="PTHR22594:SF5">
    <property type="entry name" value="ASPARTATE--TRNA LIGASE, MITOCHONDRIAL"/>
    <property type="match status" value="1"/>
</dbReference>
<dbReference type="PANTHER" id="PTHR22594">
    <property type="entry name" value="ASPARTYL/LYSYL-TRNA SYNTHETASE"/>
    <property type="match status" value="1"/>
</dbReference>
<dbReference type="Pfam" id="PF02938">
    <property type="entry name" value="GAD"/>
    <property type="match status" value="1"/>
</dbReference>
<dbReference type="Pfam" id="PF00152">
    <property type="entry name" value="tRNA-synt_2"/>
    <property type="match status" value="1"/>
</dbReference>
<dbReference type="Pfam" id="PF01336">
    <property type="entry name" value="tRNA_anti-codon"/>
    <property type="match status" value="1"/>
</dbReference>
<dbReference type="PRINTS" id="PR01042">
    <property type="entry name" value="TRNASYNTHASP"/>
</dbReference>
<dbReference type="SUPFAM" id="SSF55681">
    <property type="entry name" value="Class II aaRS and biotin synthetases"/>
    <property type="match status" value="1"/>
</dbReference>
<dbReference type="SUPFAM" id="SSF55261">
    <property type="entry name" value="GAD domain-like"/>
    <property type="match status" value="1"/>
</dbReference>
<dbReference type="SUPFAM" id="SSF50249">
    <property type="entry name" value="Nucleic acid-binding proteins"/>
    <property type="match status" value="1"/>
</dbReference>
<dbReference type="PROSITE" id="PS50862">
    <property type="entry name" value="AA_TRNA_LIGASE_II"/>
    <property type="match status" value="1"/>
</dbReference>
<gene>
    <name evidence="1" type="primary">aspS</name>
    <name type="ordered locus">BH09790</name>
</gene>
<sequence length="596" mass="67626">MHRYRSHHCAALRKCDVGIKARLSGWVHRVRDHGGILFVDLRDHFGITQIVADPASPAFKIIEKVRSEWVIRVDGEVRARSDEVINTSLPTGEIEIFAKEVEILSKSDELPLPVFGEPDYPEDIRLKYRFLDLRRETMHRNIMRRTEIIAAIRRSMQENGFTEFTTPLLTASSPEGARDFLVPSRIHQGKFYALPQAPQQYKQLLMMSGFDRYFQIAPCFRDEDPRADRLPGEFYQLDVEMSFVEQEDVLVTMEPIMRSLFEEFADGKPVTQSFPRLSYEEAMRKYGSDKPDLRNPIIMEDVSQHFYDSGFKVFAQILANDENARVWAIPAKTGGSRAFCDRMNGWAQSEGQPGLGYIFWREEQGKFEGAGPIAKNIGEQRTEALRMQLGLENGDACFFVAGDPKKFLPFAGAARTRVGEELDLVDRDCFSLAWIVDFPFFEWNEEEKKLDFAHNPFSMPQGGKDALECQDPLTLKAFQYDLVCNGYEIASGGIRNHSPEMMLKVFNLAGLSKEVVEDRFGGLYRAFHYGAPPHGGMAAGVDRIIMLLQGVKNLREVALFPMNQQALDLLMSAPSDVSPVQLRDLGIRIAPAAKND</sequence>
<keyword id="KW-0030">Aminoacyl-tRNA synthetase</keyword>
<keyword id="KW-0067">ATP-binding</keyword>
<keyword id="KW-0963">Cytoplasm</keyword>
<keyword id="KW-0436">Ligase</keyword>
<keyword id="KW-0547">Nucleotide-binding</keyword>
<keyword id="KW-0648">Protein biosynthesis</keyword>
<organism>
    <name type="scientific">Bartonella henselae (strain ATCC 49882 / DSM 28221 / CCUG 30454 / Houston 1)</name>
    <name type="common">Rochalimaea henselae</name>
    <dbReference type="NCBI Taxonomy" id="283166"/>
    <lineage>
        <taxon>Bacteria</taxon>
        <taxon>Pseudomonadati</taxon>
        <taxon>Pseudomonadota</taxon>
        <taxon>Alphaproteobacteria</taxon>
        <taxon>Hyphomicrobiales</taxon>
        <taxon>Bartonellaceae</taxon>
        <taxon>Bartonella</taxon>
    </lineage>
</organism>
<evidence type="ECO:0000255" key="1">
    <source>
        <dbReference type="HAMAP-Rule" id="MF_00044"/>
    </source>
</evidence>